<keyword id="KW-0963">Cytoplasm</keyword>
<keyword id="KW-0342">GTP-binding</keyword>
<keyword id="KW-0436">Ligase</keyword>
<keyword id="KW-0460">Magnesium</keyword>
<keyword id="KW-0479">Metal-binding</keyword>
<keyword id="KW-0547">Nucleotide-binding</keyword>
<keyword id="KW-0658">Purine biosynthesis</keyword>
<keyword id="KW-1185">Reference proteome</keyword>
<proteinExistence type="inferred from homology"/>
<gene>
    <name evidence="1" type="primary">purA</name>
    <name type="ordered locus">BRADO5935</name>
</gene>
<sequence>MANVVVVGAQWGDEGKGKIVDWLSEQADIVVRFQGGHNAGHTLVINGATYKLALLPSGVLRSGKLSVIGNGVVFDPQAFLDEVGKLQAQGLIISPDNLRVAENVTLILPLHRELDALRESSNTGTAIGTTRRGIGPAYEDKVGRRAIRLMDLADLDTLPHKIDRLLAHHNALRRGLGLELIDGAEILRELTAVAPKLLPYAETVWRLLDIKRREGKRLLFEGAQGALLDVDHGTYPYVTSSNTVAAQAATGAGLGPGAIGYVLGLCKAYTTRVGQGPFPTEQDNETGRKIGERGREFGTNTGRPRRCGWFDAVLVRQAVRTCGINGLALTKLDILDGFDTIEVCTGYRLDGKEIDHFPAGEGAQARVEPIYETIEGWKQPTANARSWADLPAQAIKYVRRIEELVGCPIALLSTSPEREDTILVQNPFEA</sequence>
<name>PURA_BRASO</name>
<reference key="1">
    <citation type="journal article" date="2007" name="Science">
        <title>Legumes symbioses: absence of nod genes in photosynthetic bradyrhizobia.</title>
        <authorList>
            <person name="Giraud E."/>
            <person name="Moulin L."/>
            <person name="Vallenet D."/>
            <person name="Barbe V."/>
            <person name="Cytryn E."/>
            <person name="Avarre J.-C."/>
            <person name="Jaubert M."/>
            <person name="Simon D."/>
            <person name="Cartieaux F."/>
            <person name="Prin Y."/>
            <person name="Bena G."/>
            <person name="Hannibal L."/>
            <person name="Fardoux J."/>
            <person name="Kojadinovic M."/>
            <person name="Vuillet L."/>
            <person name="Lajus A."/>
            <person name="Cruveiller S."/>
            <person name="Rouy Z."/>
            <person name="Mangenot S."/>
            <person name="Segurens B."/>
            <person name="Dossat C."/>
            <person name="Franck W.L."/>
            <person name="Chang W.-S."/>
            <person name="Saunders E."/>
            <person name="Bruce D."/>
            <person name="Richardson P."/>
            <person name="Normand P."/>
            <person name="Dreyfus B."/>
            <person name="Pignol D."/>
            <person name="Stacey G."/>
            <person name="Emerich D."/>
            <person name="Vermeglio A."/>
            <person name="Medigue C."/>
            <person name="Sadowsky M."/>
        </authorList>
    </citation>
    <scope>NUCLEOTIDE SEQUENCE [LARGE SCALE GENOMIC DNA]</scope>
    <source>
        <strain>ORS 278</strain>
    </source>
</reference>
<evidence type="ECO:0000255" key="1">
    <source>
        <dbReference type="HAMAP-Rule" id="MF_00011"/>
    </source>
</evidence>
<evidence type="ECO:0000256" key="2">
    <source>
        <dbReference type="SAM" id="MobiDB-lite"/>
    </source>
</evidence>
<comment type="function">
    <text evidence="1">Plays an important role in the de novo pathway of purine nucleotide biosynthesis. Catalyzes the first committed step in the biosynthesis of AMP from IMP.</text>
</comment>
<comment type="catalytic activity">
    <reaction evidence="1">
        <text>IMP + L-aspartate + GTP = N(6)-(1,2-dicarboxyethyl)-AMP + GDP + phosphate + 2 H(+)</text>
        <dbReference type="Rhea" id="RHEA:15753"/>
        <dbReference type="ChEBI" id="CHEBI:15378"/>
        <dbReference type="ChEBI" id="CHEBI:29991"/>
        <dbReference type="ChEBI" id="CHEBI:37565"/>
        <dbReference type="ChEBI" id="CHEBI:43474"/>
        <dbReference type="ChEBI" id="CHEBI:57567"/>
        <dbReference type="ChEBI" id="CHEBI:58053"/>
        <dbReference type="ChEBI" id="CHEBI:58189"/>
        <dbReference type="EC" id="6.3.4.4"/>
    </reaction>
</comment>
<comment type="cofactor">
    <cofactor evidence="1">
        <name>Mg(2+)</name>
        <dbReference type="ChEBI" id="CHEBI:18420"/>
    </cofactor>
    <text evidence="1">Binds 1 Mg(2+) ion per subunit.</text>
</comment>
<comment type="pathway">
    <text evidence="1">Purine metabolism; AMP biosynthesis via de novo pathway; AMP from IMP: step 1/2.</text>
</comment>
<comment type="subunit">
    <text evidence="1">Homodimer.</text>
</comment>
<comment type="subcellular location">
    <subcellularLocation>
        <location evidence="1">Cytoplasm</location>
    </subcellularLocation>
</comment>
<comment type="similarity">
    <text evidence="1">Belongs to the adenylosuccinate synthetase family.</text>
</comment>
<protein>
    <recommendedName>
        <fullName evidence="1">Adenylosuccinate synthetase</fullName>
        <shortName evidence="1">AMPSase</shortName>
        <shortName evidence="1">AdSS</shortName>
        <ecNumber evidence="1">6.3.4.4</ecNumber>
    </recommendedName>
    <alternativeName>
        <fullName evidence="1">IMP--aspartate ligase</fullName>
    </alternativeName>
</protein>
<organism>
    <name type="scientific">Bradyrhizobium sp. (strain ORS 278)</name>
    <dbReference type="NCBI Taxonomy" id="114615"/>
    <lineage>
        <taxon>Bacteria</taxon>
        <taxon>Pseudomonadati</taxon>
        <taxon>Pseudomonadota</taxon>
        <taxon>Alphaproteobacteria</taxon>
        <taxon>Hyphomicrobiales</taxon>
        <taxon>Nitrobacteraceae</taxon>
        <taxon>Bradyrhizobium</taxon>
    </lineage>
</organism>
<dbReference type="EC" id="6.3.4.4" evidence="1"/>
<dbReference type="EMBL" id="CU234118">
    <property type="protein sequence ID" value="CAL79594.1"/>
    <property type="molecule type" value="Genomic_DNA"/>
</dbReference>
<dbReference type="RefSeq" id="WP_012029492.1">
    <property type="nucleotide sequence ID" value="NC_009445.1"/>
</dbReference>
<dbReference type="SMR" id="A4Z0B8"/>
<dbReference type="STRING" id="114615.BRADO5935"/>
<dbReference type="KEGG" id="bra:BRADO5935"/>
<dbReference type="eggNOG" id="COG0104">
    <property type="taxonomic scope" value="Bacteria"/>
</dbReference>
<dbReference type="HOGENOM" id="CLU_029848_0_0_5"/>
<dbReference type="OrthoDB" id="9807553at2"/>
<dbReference type="UniPathway" id="UPA00075">
    <property type="reaction ID" value="UER00335"/>
</dbReference>
<dbReference type="Proteomes" id="UP000001994">
    <property type="component" value="Chromosome"/>
</dbReference>
<dbReference type="GO" id="GO:0005737">
    <property type="term" value="C:cytoplasm"/>
    <property type="evidence" value="ECO:0007669"/>
    <property type="project" value="UniProtKB-SubCell"/>
</dbReference>
<dbReference type="GO" id="GO:0004019">
    <property type="term" value="F:adenylosuccinate synthase activity"/>
    <property type="evidence" value="ECO:0007669"/>
    <property type="project" value="UniProtKB-UniRule"/>
</dbReference>
<dbReference type="GO" id="GO:0005525">
    <property type="term" value="F:GTP binding"/>
    <property type="evidence" value="ECO:0007669"/>
    <property type="project" value="UniProtKB-UniRule"/>
</dbReference>
<dbReference type="GO" id="GO:0000287">
    <property type="term" value="F:magnesium ion binding"/>
    <property type="evidence" value="ECO:0007669"/>
    <property type="project" value="UniProtKB-UniRule"/>
</dbReference>
<dbReference type="GO" id="GO:0044208">
    <property type="term" value="P:'de novo' AMP biosynthetic process"/>
    <property type="evidence" value="ECO:0007669"/>
    <property type="project" value="UniProtKB-UniRule"/>
</dbReference>
<dbReference type="GO" id="GO:0046040">
    <property type="term" value="P:IMP metabolic process"/>
    <property type="evidence" value="ECO:0007669"/>
    <property type="project" value="TreeGrafter"/>
</dbReference>
<dbReference type="CDD" id="cd03108">
    <property type="entry name" value="AdSS"/>
    <property type="match status" value="1"/>
</dbReference>
<dbReference type="FunFam" id="1.10.300.10:FF:000001">
    <property type="entry name" value="Adenylosuccinate synthetase"/>
    <property type="match status" value="1"/>
</dbReference>
<dbReference type="FunFam" id="3.90.170.10:FF:000001">
    <property type="entry name" value="Adenylosuccinate synthetase"/>
    <property type="match status" value="1"/>
</dbReference>
<dbReference type="Gene3D" id="3.40.440.10">
    <property type="entry name" value="Adenylosuccinate Synthetase, subunit A, domain 1"/>
    <property type="match status" value="1"/>
</dbReference>
<dbReference type="Gene3D" id="1.10.300.10">
    <property type="entry name" value="Adenylosuccinate Synthetase, subunit A, domain 2"/>
    <property type="match status" value="1"/>
</dbReference>
<dbReference type="Gene3D" id="3.90.170.10">
    <property type="entry name" value="Adenylosuccinate Synthetase, subunit A, domain 3"/>
    <property type="match status" value="1"/>
</dbReference>
<dbReference type="HAMAP" id="MF_00011">
    <property type="entry name" value="Adenylosucc_synth"/>
    <property type="match status" value="1"/>
</dbReference>
<dbReference type="InterPro" id="IPR018220">
    <property type="entry name" value="Adenylosuccin_syn_GTP-bd"/>
</dbReference>
<dbReference type="InterPro" id="IPR033128">
    <property type="entry name" value="Adenylosuccin_syn_Lys_AS"/>
</dbReference>
<dbReference type="InterPro" id="IPR042109">
    <property type="entry name" value="Adenylosuccinate_synth_dom1"/>
</dbReference>
<dbReference type="InterPro" id="IPR042110">
    <property type="entry name" value="Adenylosuccinate_synth_dom2"/>
</dbReference>
<dbReference type="InterPro" id="IPR042111">
    <property type="entry name" value="Adenylosuccinate_synth_dom3"/>
</dbReference>
<dbReference type="InterPro" id="IPR001114">
    <property type="entry name" value="Adenylosuccinate_synthetase"/>
</dbReference>
<dbReference type="InterPro" id="IPR027417">
    <property type="entry name" value="P-loop_NTPase"/>
</dbReference>
<dbReference type="NCBIfam" id="NF002223">
    <property type="entry name" value="PRK01117.1"/>
    <property type="match status" value="1"/>
</dbReference>
<dbReference type="NCBIfam" id="TIGR00184">
    <property type="entry name" value="purA"/>
    <property type="match status" value="1"/>
</dbReference>
<dbReference type="PANTHER" id="PTHR11846">
    <property type="entry name" value="ADENYLOSUCCINATE SYNTHETASE"/>
    <property type="match status" value="1"/>
</dbReference>
<dbReference type="PANTHER" id="PTHR11846:SF0">
    <property type="entry name" value="ADENYLOSUCCINATE SYNTHETASE"/>
    <property type="match status" value="1"/>
</dbReference>
<dbReference type="Pfam" id="PF00709">
    <property type="entry name" value="Adenylsucc_synt"/>
    <property type="match status" value="1"/>
</dbReference>
<dbReference type="SMART" id="SM00788">
    <property type="entry name" value="Adenylsucc_synt"/>
    <property type="match status" value="1"/>
</dbReference>
<dbReference type="SUPFAM" id="SSF52540">
    <property type="entry name" value="P-loop containing nucleoside triphosphate hydrolases"/>
    <property type="match status" value="1"/>
</dbReference>
<dbReference type="PROSITE" id="PS01266">
    <property type="entry name" value="ADENYLOSUCCIN_SYN_1"/>
    <property type="match status" value="1"/>
</dbReference>
<dbReference type="PROSITE" id="PS00513">
    <property type="entry name" value="ADENYLOSUCCIN_SYN_2"/>
    <property type="match status" value="1"/>
</dbReference>
<feature type="chain" id="PRO_1000000785" description="Adenylosuccinate synthetase">
    <location>
        <begin position="1"/>
        <end position="430"/>
    </location>
</feature>
<feature type="region of interest" description="Disordered" evidence="2">
    <location>
        <begin position="277"/>
        <end position="297"/>
    </location>
</feature>
<feature type="compositionally biased region" description="Basic and acidic residues" evidence="2">
    <location>
        <begin position="285"/>
        <end position="296"/>
    </location>
</feature>
<feature type="active site" description="Proton acceptor" evidence="1">
    <location>
        <position position="13"/>
    </location>
</feature>
<feature type="active site" description="Proton donor" evidence="1">
    <location>
        <position position="41"/>
    </location>
</feature>
<feature type="binding site" evidence="1">
    <location>
        <begin position="12"/>
        <end position="18"/>
    </location>
    <ligand>
        <name>GTP</name>
        <dbReference type="ChEBI" id="CHEBI:37565"/>
    </ligand>
</feature>
<feature type="binding site" description="in other chain" evidence="1">
    <location>
        <begin position="13"/>
        <end position="16"/>
    </location>
    <ligand>
        <name>IMP</name>
        <dbReference type="ChEBI" id="CHEBI:58053"/>
        <note>ligand shared between dimeric partners</note>
    </ligand>
</feature>
<feature type="binding site" evidence="1">
    <location>
        <position position="13"/>
    </location>
    <ligand>
        <name>Mg(2+)</name>
        <dbReference type="ChEBI" id="CHEBI:18420"/>
    </ligand>
</feature>
<feature type="binding site" description="in other chain" evidence="1">
    <location>
        <begin position="38"/>
        <end position="41"/>
    </location>
    <ligand>
        <name>IMP</name>
        <dbReference type="ChEBI" id="CHEBI:58053"/>
        <note>ligand shared between dimeric partners</note>
    </ligand>
</feature>
<feature type="binding site" evidence="1">
    <location>
        <begin position="40"/>
        <end position="42"/>
    </location>
    <ligand>
        <name>GTP</name>
        <dbReference type="ChEBI" id="CHEBI:37565"/>
    </ligand>
</feature>
<feature type="binding site" evidence="1">
    <location>
        <position position="40"/>
    </location>
    <ligand>
        <name>Mg(2+)</name>
        <dbReference type="ChEBI" id="CHEBI:18420"/>
    </ligand>
</feature>
<feature type="binding site" description="in other chain" evidence="1">
    <location>
        <position position="130"/>
    </location>
    <ligand>
        <name>IMP</name>
        <dbReference type="ChEBI" id="CHEBI:58053"/>
        <note>ligand shared between dimeric partners</note>
    </ligand>
</feature>
<feature type="binding site" evidence="1">
    <location>
        <position position="144"/>
    </location>
    <ligand>
        <name>IMP</name>
        <dbReference type="ChEBI" id="CHEBI:58053"/>
        <note>ligand shared between dimeric partners</note>
    </ligand>
</feature>
<feature type="binding site" description="in other chain" evidence="1">
    <location>
        <position position="224"/>
    </location>
    <ligand>
        <name>IMP</name>
        <dbReference type="ChEBI" id="CHEBI:58053"/>
        <note>ligand shared between dimeric partners</note>
    </ligand>
</feature>
<feature type="binding site" description="in other chain" evidence="1">
    <location>
        <position position="239"/>
    </location>
    <ligand>
        <name>IMP</name>
        <dbReference type="ChEBI" id="CHEBI:58053"/>
        <note>ligand shared between dimeric partners</note>
    </ligand>
</feature>
<feature type="binding site" evidence="1">
    <location>
        <begin position="299"/>
        <end position="305"/>
    </location>
    <ligand>
        <name>substrate</name>
    </ligand>
</feature>
<feature type="binding site" description="in other chain" evidence="1">
    <location>
        <position position="303"/>
    </location>
    <ligand>
        <name>IMP</name>
        <dbReference type="ChEBI" id="CHEBI:58053"/>
        <note>ligand shared between dimeric partners</note>
    </ligand>
</feature>
<feature type="binding site" evidence="1">
    <location>
        <position position="305"/>
    </location>
    <ligand>
        <name>GTP</name>
        <dbReference type="ChEBI" id="CHEBI:37565"/>
    </ligand>
</feature>
<feature type="binding site" evidence="1">
    <location>
        <begin position="331"/>
        <end position="333"/>
    </location>
    <ligand>
        <name>GTP</name>
        <dbReference type="ChEBI" id="CHEBI:37565"/>
    </ligand>
</feature>
<feature type="binding site" evidence="1">
    <location>
        <begin position="413"/>
        <end position="415"/>
    </location>
    <ligand>
        <name>GTP</name>
        <dbReference type="ChEBI" id="CHEBI:37565"/>
    </ligand>
</feature>
<accession>A4Z0B8</accession>